<sequence length="164" mass="18468">MASKQERLTDLIVPVVESLGCELWGLEYLTQGRYTTLRIFIDGPQGVSLDDCERVSRQISAVLDVEDPIDGEYTLEVSSPGLDRPLYTEAQYARYVGETVNLRLRIAVEGRRRFKGVISAIEEGALLLQFDNQTVRLPIETIDKGNLVPRYDDILREHAAGLDE</sequence>
<proteinExistence type="inferred from homology"/>
<keyword id="KW-0963">Cytoplasm</keyword>
<keyword id="KW-1185">Reference proteome</keyword>
<keyword id="KW-0690">Ribosome biogenesis</keyword>
<protein>
    <recommendedName>
        <fullName evidence="1">Ribosome maturation factor RimP</fullName>
    </recommendedName>
</protein>
<comment type="function">
    <text evidence="1">Required for maturation of 30S ribosomal subunits.</text>
</comment>
<comment type="subcellular location">
    <subcellularLocation>
        <location evidence="1">Cytoplasm</location>
    </subcellularLocation>
</comment>
<comment type="similarity">
    <text evidence="1">Belongs to the RimP family.</text>
</comment>
<comment type="sequence caution" evidence="2">
    <conflict type="erroneous initiation">
        <sequence resource="EMBL-CDS" id="ACE86031"/>
    </conflict>
</comment>
<feature type="chain" id="PRO_0000384624" description="Ribosome maturation factor RimP">
    <location>
        <begin position="1"/>
        <end position="164"/>
    </location>
</feature>
<gene>
    <name evidence="1" type="primary">rimP</name>
    <name type="ordered locus">CJA_0434</name>
</gene>
<name>RIMP_CELJU</name>
<organism>
    <name type="scientific">Cellvibrio japonicus (strain Ueda107)</name>
    <name type="common">Pseudomonas fluorescens subsp. cellulosa</name>
    <dbReference type="NCBI Taxonomy" id="498211"/>
    <lineage>
        <taxon>Bacteria</taxon>
        <taxon>Pseudomonadati</taxon>
        <taxon>Pseudomonadota</taxon>
        <taxon>Gammaproteobacteria</taxon>
        <taxon>Cellvibrionales</taxon>
        <taxon>Cellvibrionaceae</taxon>
        <taxon>Cellvibrio</taxon>
    </lineage>
</organism>
<accession>B3PI94</accession>
<dbReference type="EMBL" id="CP000934">
    <property type="protein sequence ID" value="ACE86031.1"/>
    <property type="status" value="ALT_INIT"/>
    <property type="molecule type" value="Genomic_DNA"/>
</dbReference>
<dbReference type="RefSeq" id="WP_041551906.1">
    <property type="nucleotide sequence ID" value="NC_010995.1"/>
</dbReference>
<dbReference type="SMR" id="B3PI94"/>
<dbReference type="STRING" id="498211.CJA_0434"/>
<dbReference type="KEGG" id="cja:CJA_0434"/>
<dbReference type="eggNOG" id="COG0779">
    <property type="taxonomic scope" value="Bacteria"/>
</dbReference>
<dbReference type="HOGENOM" id="CLU_070525_1_1_6"/>
<dbReference type="OrthoDB" id="9805006at2"/>
<dbReference type="Proteomes" id="UP000001036">
    <property type="component" value="Chromosome"/>
</dbReference>
<dbReference type="GO" id="GO:0005829">
    <property type="term" value="C:cytosol"/>
    <property type="evidence" value="ECO:0007669"/>
    <property type="project" value="TreeGrafter"/>
</dbReference>
<dbReference type="GO" id="GO:0000028">
    <property type="term" value="P:ribosomal small subunit assembly"/>
    <property type="evidence" value="ECO:0007669"/>
    <property type="project" value="TreeGrafter"/>
</dbReference>
<dbReference type="GO" id="GO:0006412">
    <property type="term" value="P:translation"/>
    <property type="evidence" value="ECO:0007669"/>
    <property type="project" value="TreeGrafter"/>
</dbReference>
<dbReference type="CDD" id="cd01734">
    <property type="entry name" value="YlxS_C"/>
    <property type="match status" value="1"/>
</dbReference>
<dbReference type="FunFam" id="3.30.300.70:FF:000001">
    <property type="entry name" value="Ribosome maturation factor RimP"/>
    <property type="match status" value="1"/>
</dbReference>
<dbReference type="Gene3D" id="2.30.30.180">
    <property type="entry name" value="Ribosome maturation factor RimP, C-terminal domain"/>
    <property type="match status" value="1"/>
</dbReference>
<dbReference type="Gene3D" id="3.30.300.70">
    <property type="entry name" value="RimP-like superfamily, N-terminal"/>
    <property type="match status" value="1"/>
</dbReference>
<dbReference type="HAMAP" id="MF_01077">
    <property type="entry name" value="RimP"/>
    <property type="match status" value="1"/>
</dbReference>
<dbReference type="InterPro" id="IPR003728">
    <property type="entry name" value="Ribosome_maturation_RimP"/>
</dbReference>
<dbReference type="InterPro" id="IPR028998">
    <property type="entry name" value="RimP_C"/>
</dbReference>
<dbReference type="InterPro" id="IPR036847">
    <property type="entry name" value="RimP_C_sf"/>
</dbReference>
<dbReference type="InterPro" id="IPR028989">
    <property type="entry name" value="RimP_N"/>
</dbReference>
<dbReference type="InterPro" id="IPR035956">
    <property type="entry name" value="RimP_N_sf"/>
</dbReference>
<dbReference type="NCBIfam" id="NF000927">
    <property type="entry name" value="PRK00092.1-1"/>
    <property type="match status" value="1"/>
</dbReference>
<dbReference type="PANTHER" id="PTHR33867">
    <property type="entry name" value="RIBOSOME MATURATION FACTOR RIMP"/>
    <property type="match status" value="1"/>
</dbReference>
<dbReference type="PANTHER" id="PTHR33867:SF1">
    <property type="entry name" value="RIBOSOME MATURATION FACTOR RIMP"/>
    <property type="match status" value="1"/>
</dbReference>
<dbReference type="Pfam" id="PF17384">
    <property type="entry name" value="DUF150_C"/>
    <property type="match status" value="1"/>
</dbReference>
<dbReference type="Pfam" id="PF02576">
    <property type="entry name" value="RimP_N"/>
    <property type="match status" value="1"/>
</dbReference>
<dbReference type="SUPFAM" id="SSF74942">
    <property type="entry name" value="YhbC-like, C-terminal domain"/>
    <property type="match status" value="1"/>
</dbReference>
<dbReference type="SUPFAM" id="SSF75420">
    <property type="entry name" value="YhbC-like, N-terminal domain"/>
    <property type="match status" value="1"/>
</dbReference>
<evidence type="ECO:0000255" key="1">
    <source>
        <dbReference type="HAMAP-Rule" id="MF_01077"/>
    </source>
</evidence>
<evidence type="ECO:0000305" key="2"/>
<reference key="1">
    <citation type="journal article" date="2008" name="J. Bacteriol.">
        <title>Insights into plant cell wall degradation from the genome sequence of the soil bacterium Cellvibrio japonicus.</title>
        <authorList>
            <person name="DeBoy R.T."/>
            <person name="Mongodin E.F."/>
            <person name="Fouts D.E."/>
            <person name="Tailford L.E."/>
            <person name="Khouri H."/>
            <person name="Emerson J.B."/>
            <person name="Mohamoud Y."/>
            <person name="Watkins K."/>
            <person name="Henrissat B."/>
            <person name="Gilbert H.J."/>
            <person name="Nelson K.E."/>
        </authorList>
    </citation>
    <scope>NUCLEOTIDE SEQUENCE [LARGE SCALE GENOMIC DNA]</scope>
    <source>
        <strain>Ueda107</strain>
    </source>
</reference>